<accession>A9WWW9</accession>
<reference key="1">
    <citation type="submission" date="2007-12" db="EMBL/GenBank/DDBJ databases">
        <title>Brucella suis ATCC 23445 whole genome shotgun sequencing project.</title>
        <authorList>
            <person name="Setubal J.C."/>
            <person name="Bowns C."/>
            <person name="Boyle S."/>
            <person name="Crasta O.R."/>
            <person name="Czar M.J."/>
            <person name="Dharmanolla C."/>
            <person name="Gillespie J.J."/>
            <person name="Kenyon R.W."/>
            <person name="Lu J."/>
            <person name="Mane S."/>
            <person name="Mohapatra S."/>
            <person name="Nagrani S."/>
            <person name="Purkayastha A."/>
            <person name="Rajasimha H.K."/>
            <person name="Shallom J.M."/>
            <person name="Shallom S."/>
            <person name="Shukla M."/>
            <person name="Snyder E.E."/>
            <person name="Sobral B.W."/>
            <person name="Wattam A.R."/>
            <person name="Will R."/>
            <person name="Williams K."/>
            <person name="Yoo H."/>
            <person name="Bruce D."/>
            <person name="Detter C."/>
            <person name="Munk C."/>
            <person name="Brettin T.S."/>
        </authorList>
    </citation>
    <scope>NUCLEOTIDE SEQUENCE [LARGE SCALE GENOMIC DNA]</scope>
    <source>
        <strain>ATCC 23445 / NCTC 10510</strain>
    </source>
</reference>
<protein>
    <recommendedName>
        <fullName evidence="1">GTPase Obg</fullName>
        <ecNumber evidence="1">3.6.5.-</ecNumber>
    </recommendedName>
    <alternativeName>
        <fullName evidence="1">GTP-binding protein Obg</fullName>
    </alternativeName>
</protein>
<keyword id="KW-0963">Cytoplasm</keyword>
<keyword id="KW-0342">GTP-binding</keyword>
<keyword id="KW-0378">Hydrolase</keyword>
<keyword id="KW-0460">Magnesium</keyword>
<keyword id="KW-0479">Metal-binding</keyword>
<keyword id="KW-0547">Nucleotide-binding</keyword>
<dbReference type="EC" id="3.6.5.-" evidence="1"/>
<dbReference type="EMBL" id="CP000912">
    <property type="protein sequence ID" value="ABY40255.1"/>
    <property type="molecule type" value="Genomic_DNA"/>
</dbReference>
<dbReference type="SMR" id="A9WWW9"/>
<dbReference type="KEGG" id="bmt:BSUIS_B1323"/>
<dbReference type="HOGENOM" id="CLU_011747_2_0_5"/>
<dbReference type="Proteomes" id="UP000008545">
    <property type="component" value="Chromosome II"/>
</dbReference>
<dbReference type="GO" id="GO:0005737">
    <property type="term" value="C:cytoplasm"/>
    <property type="evidence" value="ECO:0007669"/>
    <property type="project" value="UniProtKB-SubCell"/>
</dbReference>
<dbReference type="GO" id="GO:0005525">
    <property type="term" value="F:GTP binding"/>
    <property type="evidence" value="ECO:0007669"/>
    <property type="project" value="UniProtKB-UniRule"/>
</dbReference>
<dbReference type="GO" id="GO:0003924">
    <property type="term" value="F:GTPase activity"/>
    <property type="evidence" value="ECO:0007669"/>
    <property type="project" value="UniProtKB-UniRule"/>
</dbReference>
<dbReference type="GO" id="GO:0000287">
    <property type="term" value="F:magnesium ion binding"/>
    <property type="evidence" value="ECO:0007669"/>
    <property type="project" value="InterPro"/>
</dbReference>
<dbReference type="GO" id="GO:0042254">
    <property type="term" value="P:ribosome biogenesis"/>
    <property type="evidence" value="ECO:0007669"/>
    <property type="project" value="UniProtKB-UniRule"/>
</dbReference>
<dbReference type="CDD" id="cd01898">
    <property type="entry name" value="Obg"/>
    <property type="match status" value="1"/>
</dbReference>
<dbReference type="FunFam" id="2.70.210.12:FF:000001">
    <property type="entry name" value="GTPase Obg"/>
    <property type="match status" value="1"/>
</dbReference>
<dbReference type="Gene3D" id="2.70.210.12">
    <property type="entry name" value="GTP1/OBG domain"/>
    <property type="match status" value="1"/>
</dbReference>
<dbReference type="Gene3D" id="3.40.50.300">
    <property type="entry name" value="P-loop containing nucleotide triphosphate hydrolases"/>
    <property type="match status" value="1"/>
</dbReference>
<dbReference type="HAMAP" id="MF_01454">
    <property type="entry name" value="GTPase_Obg"/>
    <property type="match status" value="1"/>
</dbReference>
<dbReference type="InterPro" id="IPR031167">
    <property type="entry name" value="G_OBG"/>
</dbReference>
<dbReference type="InterPro" id="IPR006073">
    <property type="entry name" value="GTP-bd"/>
</dbReference>
<dbReference type="InterPro" id="IPR014100">
    <property type="entry name" value="GTP-bd_Obg/CgtA"/>
</dbReference>
<dbReference type="InterPro" id="IPR006074">
    <property type="entry name" value="GTP1-OBG_CS"/>
</dbReference>
<dbReference type="InterPro" id="IPR006169">
    <property type="entry name" value="GTP1_OBG_dom"/>
</dbReference>
<dbReference type="InterPro" id="IPR036726">
    <property type="entry name" value="GTP1_OBG_dom_sf"/>
</dbReference>
<dbReference type="InterPro" id="IPR045086">
    <property type="entry name" value="OBG_GTPase"/>
</dbReference>
<dbReference type="InterPro" id="IPR027417">
    <property type="entry name" value="P-loop_NTPase"/>
</dbReference>
<dbReference type="NCBIfam" id="TIGR02729">
    <property type="entry name" value="Obg_CgtA"/>
    <property type="match status" value="1"/>
</dbReference>
<dbReference type="NCBIfam" id="NF008955">
    <property type="entry name" value="PRK12297.1"/>
    <property type="match status" value="1"/>
</dbReference>
<dbReference type="NCBIfam" id="NF008956">
    <property type="entry name" value="PRK12299.1"/>
    <property type="match status" value="1"/>
</dbReference>
<dbReference type="PANTHER" id="PTHR11702">
    <property type="entry name" value="DEVELOPMENTALLY REGULATED GTP-BINDING PROTEIN-RELATED"/>
    <property type="match status" value="1"/>
</dbReference>
<dbReference type="PANTHER" id="PTHR11702:SF31">
    <property type="entry name" value="MITOCHONDRIAL RIBOSOME-ASSOCIATED GTPASE 2"/>
    <property type="match status" value="1"/>
</dbReference>
<dbReference type="Pfam" id="PF01018">
    <property type="entry name" value="GTP1_OBG"/>
    <property type="match status" value="1"/>
</dbReference>
<dbReference type="Pfam" id="PF01926">
    <property type="entry name" value="MMR_HSR1"/>
    <property type="match status" value="1"/>
</dbReference>
<dbReference type="PIRSF" id="PIRSF002401">
    <property type="entry name" value="GTP_bd_Obg/CgtA"/>
    <property type="match status" value="1"/>
</dbReference>
<dbReference type="PRINTS" id="PR00326">
    <property type="entry name" value="GTP1OBG"/>
</dbReference>
<dbReference type="SUPFAM" id="SSF82051">
    <property type="entry name" value="Obg GTP-binding protein N-terminal domain"/>
    <property type="match status" value="1"/>
</dbReference>
<dbReference type="SUPFAM" id="SSF52540">
    <property type="entry name" value="P-loop containing nucleoside triphosphate hydrolases"/>
    <property type="match status" value="1"/>
</dbReference>
<dbReference type="PROSITE" id="PS51710">
    <property type="entry name" value="G_OBG"/>
    <property type="match status" value="1"/>
</dbReference>
<dbReference type="PROSITE" id="PS00905">
    <property type="entry name" value="GTP1_OBG"/>
    <property type="match status" value="1"/>
</dbReference>
<dbReference type="PROSITE" id="PS51883">
    <property type="entry name" value="OBG"/>
    <property type="match status" value="1"/>
</dbReference>
<name>OBG_BRUSI</name>
<proteinExistence type="inferred from homology"/>
<feature type="chain" id="PRO_0000385772" description="GTPase Obg">
    <location>
        <begin position="1"/>
        <end position="341"/>
    </location>
</feature>
<feature type="domain" description="Obg" evidence="2">
    <location>
        <begin position="1"/>
        <end position="159"/>
    </location>
</feature>
<feature type="domain" description="OBG-type G" evidence="1">
    <location>
        <begin position="160"/>
        <end position="327"/>
    </location>
</feature>
<feature type="binding site" evidence="1">
    <location>
        <begin position="166"/>
        <end position="173"/>
    </location>
    <ligand>
        <name>GTP</name>
        <dbReference type="ChEBI" id="CHEBI:37565"/>
    </ligand>
</feature>
<feature type="binding site" evidence="1">
    <location>
        <position position="173"/>
    </location>
    <ligand>
        <name>Mg(2+)</name>
        <dbReference type="ChEBI" id="CHEBI:18420"/>
    </ligand>
</feature>
<feature type="binding site" evidence="1">
    <location>
        <begin position="191"/>
        <end position="195"/>
    </location>
    <ligand>
        <name>GTP</name>
        <dbReference type="ChEBI" id="CHEBI:37565"/>
    </ligand>
</feature>
<feature type="binding site" evidence="1">
    <location>
        <position position="193"/>
    </location>
    <ligand>
        <name>Mg(2+)</name>
        <dbReference type="ChEBI" id="CHEBI:18420"/>
    </ligand>
</feature>
<feature type="binding site" evidence="1">
    <location>
        <begin position="212"/>
        <end position="215"/>
    </location>
    <ligand>
        <name>GTP</name>
        <dbReference type="ChEBI" id="CHEBI:37565"/>
    </ligand>
</feature>
<feature type="binding site" evidence="1">
    <location>
        <begin position="279"/>
        <end position="282"/>
    </location>
    <ligand>
        <name>GTP</name>
        <dbReference type="ChEBI" id="CHEBI:37565"/>
    </ligand>
</feature>
<feature type="binding site" evidence="1">
    <location>
        <begin position="308"/>
        <end position="310"/>
    </location>
    <ligand>
        <name>GTP</name>
        <dbReference type="ChEBI" id="CHEBI:37565"/>
    </ligand>
</feature>
<organism>
    <name type="scientific">Brucella suis (strain ATCC 23445 / NCTC 10510)</name>
    <dbReference type="NCBI Taxonomy" id="470137"/>
    <lineage>
        <taxon>Bacteria</taxon>
        <taxon>Pseudomonadati</taxon>
        <taxon>Pseudomonadota</taxon>
        <taxon>Alphaproteobacteria</taxon>
        <taxon>Hyphomicrobiales</taxon>
        <taxon>Brucellaceae</taxon>
        <taxon>Brucella/Ochrobactrum group</taxon>
        <taxon>Brucella</taxon>
    </lineage>
</organism>
<evidence type="ECO:0000255" key="1">
    <source>
        <dbReference type="HAMAP-Rule" id="MF_01454"/>
    </source>
</evidence>
<evidence type="ECO:0000255" key="2">
    <source>
        <dbReference type="PROSITE-ProRule" id="PRU01231"/>
    </source>
</evidence>
<gene>
    <name evidence="1" type="primary">obg</name>
    <name type="ordered locus">BSUIS_B1323</name>
</gene>
<sequence length="341" mass="36789">MKFLDQAKIYIRSGNGGAGAVSFRREKFLEFGGPDGGDGGRGGDVWVEAVDGLNTLIDYRYQQHFKAKTGMHGMGRNMTGGKGDDVVLRVPVGTQIFEEDNETLICDITEVGQRYRLAKGGNGGFGNLHFTTSTNRAPRRANPGQEGIERTIWLRLKLIADAGLVGLPNAGKSTFLASVTAAKPKIADYPFTTLHPNLGVARIDGREFVIADIPGLIEGASEGVGLGDRFLGHVERTRVLLHLVSAQEEDVAKAYQVIRGELEAYEHGLADKPEIVALSQVDTLDPETRKAKVKALKKACGCEPLLLSAVSHEGLNDTLRQLARIIDLSRAEEAGTAQAEE</sequence>
<comment type="function">
    <text evidence="1">An essential GTPase which binds GTP, GDP and possibly (p)ppGpp with moderate affinity, with high nucleotide exchange rates and a fairly low GTP hydrolysis rate. Plays a role in control of the cell cycle, stress response, ribosome biogenesis and in those bacteria that undergo differentiation, in morphogenesis control.</text>
</comment>
<comment type="cofactor">
    <cofactor evidence="1">
        <name>Mg(2+)</name>
        <dbReference type="ChEBI" id="CHEBI:18420"/>
    </cofactor>
</comment>
<comment type="subunit">
    <text evidence="1">Monomer.</text>
</comment>
<comment type="subcellular location">
    <subcellularLocation>
        <location evidence="1">Cytoplasm</location>
    </subcellularLocation>
</comment>
<comment type="similarity">
    <text evidence="1">Belongs to the TRAFAC class OBG-HflX-like GTPase superfamily. OBG GTPase family.</text>
</comment>